<geneLocation type="chloroplast"/>
<feature type="chain" id="PRO_0000207936" description="Protein PsbN">
    <location>
        <begin position="1"/>
        <end position="43"/>
    </location>
</feature>
<feature type="transmembrane region" description="Helical" evidence="1">
    <location>
        <begin position="7"/>
        <end position="27"/>
    </location>
</feature>
<reference key="1">
    <citation type="journal article" date="2004" name="DNA Res.">
        <title>Complete chloroplast genome sequence from Korea ginseng (Panax schinseng Nees) and comparative analysis of sequence evolution among 17 vascular plants.</title>
        <authorList>
            <person name="Kim K.-J."/>
            <person name="Lee H.-L."/>
        </authorList>
    </citation>
    <scope>NUCLEOTIDE SEQUENCE [LARGE SCALE GENOMIC DNA]</scope>
</reference>
<evidence type="ECO:0000255" key="1">
    <source>
        <dbReference type="HAMAP-Rule" id="MF_00293"/>
    </source>
</evidence>
<sequence length="43" mass="4722">METATLVAIFISGLLVSFTGYALYTAFGQPSQQLRDPFEEHGD</sequence>
<keyword id="KW-0150">Chloroplast</keyword>
<keyword id="KW-0472">Membrane</keyword>
<keyword id="KW-0934">Plastid</keyword>
<keyword id="KW-0793">Thylakoid</keyword>
<keyword id="KW-0812">Transmembrane</keyword>
<keyword id="KW-1133">Transmembrane helix</keyword>
<proteinExistence type="inferred from homology"/>
<organism>
    <name type="scientific">Panax ginseng</name>
    <name type="common">Korean ginseng</name>
    <dbReference type="NCBI Taxonomy" id="4054"/>
    <lineage>
        <taxon>Eukaryota</taxon>
        <taxon>Viridiplantae</taxon>
        <taxon>Streptophyta</taxon>
        <taxon>Embryophyta</taxon>
        <taxon>Tracheophyta</taxon>
        <taxon>Spermatophyta</taxon>
        <taxon>Magnoliopsida</taxon>
        <taxon>eudicotyledons</taxon>
        <taxon>Gunneridae</taxon>
        <taxon>Pentapetalae</taxon>
        <taxon>asterids</taxon>
        <taxon>campanulids</taxon>
        <taxon>Apiales</taxon>
        <taxon>Araliaceae</taxon>
        <taxon>Panax</taxon>
    </lineage>
</organism>
<protein>
    <recommendedName>
        <fullName evidence="1">Protein PsbN</fullName>
    </recommendedName>
</protein>
<accession>Q68RX9</accession>
<dbReference type="EMBL" id="AY582139">
    <property type="protein sequence ID" value="AAT98536.1"/>
    <property type="molecule type" value="Genomic_DNA"/>
</dbReference>
<dbReference type="RefSeq" id="YP_086993.1">
    <property type="nucleotide sequence ID" value="NC_006290.1"/>
</dbReference>
<dbReference type="SMR" id="Q68RX9"/>
<dbReference type="GeneID" id="3021521"/>
<dbReference type="GO" id="GO:0009535">
    <property type="term" value="C:chloroplast thylakoid membrane"/>
    <property type="evidence" value="ECO:0007669"/>
    <property type="project" value="UniProtKB-SubCell"/>
</dbReference>
<dbReference type="GO" id="GO:0015979">
    <property type="term" value="P:photosynthesis"/>
    <property type="evidence" value="ECO:0007669"/>
    <property type="project" value="InterPro"/>
</dbReference>
<dbReference type="HAMAP" id="MF_00293">
    <property type="entry name" value="PSII_PsbN"/>
    <property type="match status" value="1"/>
</dbReference>
<dbReference type="InterPro" id="IPR003398">
    <property type="entry name" value="PSII_PsbN"/>
</dbReference>
<dbReference type="PANTHER" id="PTHR35326">
    <property type="entry name" value="PROTEIN PSBN"/>
    <property type="match status" value="1"/>
</dbReference>
<dbReference type="PANTHER" id="PTHR35326:SF3">
    <property type="entry name" value="PROTEIN PSBN"/>
    <property type="match status" value="1"/>
</dbReference>
<dbReference type="Pfam" id="PF02468">
    <property type="entry name" value="PsbN"/>
    <property type="match status" value="1"/>
</dbReference>
<name>PSBN_PANGI</name>
<comment type="function">
    <text evidence="1">May play a role in photosystem I and II biogenesis.</text>
</comment>
<comment type="subcellular location">
    <subcellularLocation>
        <location evidence="1">Plastid</location>
        <location evidence="1">Chloroplast thylakoid membrane</location>
        <topology evidence="1">Single-pass membrane protein</topology>
    </subcellularLocation>
</comment>
<comment type="similarity">
    <text evidence="1">Belongs to the PsbN family.</text>
</comment>
<comment type="caution">
    <text evidence="1">Originally thought to be a component of PSII; based on experiments in Synechocystis, N.tabacum and barley, and its absence from PSII in T.elongatus and T.vulcanus, this is probably not true.</text>
</comment>
<gene>
    <name evidence="1" type="primary">psbN</name>
    <name type="ORF">PSC0762</name>
</gene>